<keyword id="KW-0028">Amino-acid biosynthesis</keyword>
<keyword id="KW-0963">Cytoplasm</keyword>
<keyword id="KW-0368">Histidine biosynthesis</keyword>
<keyword id="KW-0456">Lyase</keyword>
<name>HIS6_ECOBW</name>
<sequence length="258" mass="28454">MLAKRIIPCLDVRDGQVVKGVQFRNHEIIGDIVPLAKRYAEEGADELVFYDITASSDGRVVDKSWVSRVAEVIDIPFCVAGGIKSLEDAAKILSFGADKISINSPALADPTLITRLADRFGVQCIVVGIDTWYDAETGKYHVNQYTGDESRTRVTQWETLDWVQEVQKRGAGEIVLNMMNQDGVRNGYDLEQLKKVREVCHVPLIASGGAGTMEHFLEAFRDADVDGALAASVFHKQIINIGELKAYLATQGVEIRIC</sequence>
<organism>
    <name type="scientific">Escherichia coli (strain K12 / MC4100 / BW2952)</name>
    <dbReference type="NCBI Taxonomy" id="595496"/>
    <lineage>
        <taxon>Bacteria</taxon>
        <taxon>Pseudomonadati</taxon>
        <taxon>Pseudomonadota</taxon>
        <taxon>Gammaproteobacteria</taxon>
        <taxon>Enterobacterales</taxon>
        <taxon>Enterobacteriaceae</taxon>
        <taxon>Escherichia</taxon>
    </lineage>
</organism>
<reference key="1">
    <citation type="journal article" date="2009" name="J. Bacteriol.">
        <title>Genomic sequencing reveals regulatory mutations and recombinational events in the widely used MC4100 lineage of Escherichia coli K-12.</title>
        <authorList>
            <person name="Ferenci T."/>
            <person name="Zhou Z."/>
            <person name="Betteridge T."/>
            <person name="Ren Y."/>
            <person name="Liu Y."/>
            <person name="Feng L."/>
            <person name="Reeves P.R."/>
            <person name="Wang L."/>
        </authorList>
    </citation>
    <scope>NUCLEOTIDE SEQUENCE [LARGE SCALE GENOMIC DNA]</scope>
    <source>
        <strain>K12 / MC4100 / BW2952</strain>
    </source>
</reference>
<protein>
    <recommendedName>
        <fullName evidence="1">Imidazole glycerol phosphate synthase subunit HisF</fullName>
        <ecNumber evidence="1">4.3.2.10</ecNumber>
    </recommendedName>
    <alternativeName>
        <fullName evidence="1">IGP synthase cyclase subunit</fullName>
    </alternativeName>
    <alternativeName>
        <fullName evidence="1">IGP synthase subunit HisF</fullName>
    </alternativeName>
    <alternativeName>
        <fullName evidence="1">ImGP synthase subunit HisF</fullName>
        <shortName evidence="1">IGPS subunit HisF</shortName>
    </alternativeName>
</protein>
<dbReference type="EC" id="4.3.2.10" evidence="1"/>
<dbReference type="EMBL" id="CP001396">
    <property type="protein sequence ID" value="ACR63500.1"/>
    <property type="molecule type" value="Genomic_DNA"/>
</dbReference>
<dbReference type="RefSeq" id="WP_000880182.1">
    <property type="nucleotide sequence ID" value="NC_012759.1"/>
</dbReference>
<dbReference type="SMR" id="C4ZSB4"/>
<dbReference type="GeneID" id="86946979"/>
<dbReference type="KEGG" id="ebw:BWG_1816"/>
<dbReference type="HOGENOM" id="CLU_048577_4_0_6"/>
<dbReference type="UniPathway" id="UPA00031">
    <property type="reaction ID" value="UER00010"/>
</dbReference>
<dbReference type="GO" id="GO:0005737">
    <property type="term" value="C:cytoplasm"/>
    <property type="evidence" value="ECO:0007669"/>
    <property type="project" value="UniProtKB-SubCell"/>
</dbReference>
<dbReference type="GO" id="GO:0000107">
    <property type="term" value="F:imidazoleglycerol-phosphate synthase activity"/>
    <property type="evidence" value="ECO:0007669"/>
    <property type="project" value="UniProtKB-UniRule"/>
</dbReference>
<dbReference type="GO" id="GO:0016829">
    <property type="term" value="F:lyase activity"/>
    <property type="evidence" value="ECO:0007669"/>
    <property type="project" value="UniProtKB-KW"/>
</dbReference>
<dbReference type="GO" id="GO:0000105">
    <property type="term" value="P:L-histidine biosynthetic process"/>
    <property type="evidence" value="ECO:0007669"/>
    <property type="project" value="UniProtKB-UniRule"/>
</dbReference>
<dbReference type="CDD" id="cd04731">
    <property type="entry name" value="HisF"/>
    <property type="match status" value="1"/>
</dbReference>
<dbReference type="FunFam" id="3.20.20.70:FF:000006">
    <property type="entry name" value="Imidazole glycerol phosphate synthase subunit HisF"/>
    <property type="match status" value="1"/>
</dbReference>
<dbReference type="Gene3D" id="3.20.20.70">
    <property type="entry name" value="Aldolase class I"/>
    <property type="match status" value="1"/>
</dbReference>
<dbReference type="HAMAP" id="MF_01013">
    <property type="entry name" value="HisF"/>
    <property type="match status" value="1"/>
</dbReference>
<dbReference type="InterPro" id="IPR013785">
    <property type="entry name" value="Aldolase_TIM"/>
</dbReference>
<dbReference type="InterPro" id="IPR006062">
    <property type="entry name" value="His_biosynth"/>
</dbReference>
<dbReference type="InterPro" id="IPR004651">
    <property type="entry name" value="HisF"/>
</dbReference>
<dbReference type="InterPro" id="IPR050064">
    <property type="entry name" value="IGPS_HisA/HisF"/>
</dbReference>
<dbReference type="InterPro" id="IPR011060">
    <property type="entry name" value="RibuloseP-bd_barrel"/>
</dbReference>
<dbReference type="NCBIfam" id="TIGR00735">
    <property type="entry name" value="hisF"/>
    <property type="match status" value="1"/>
</dbReference>
<dbReference type="PANTHER" id="PTHR21235:SF2">
    <property type="entry name" value="IMIDAZOLE GLYCEROL PHOSPHATE SYNTHASE HISHF"/>
    <property type="match status" value="1"/>
</dbReference>
<dbReference type="PANTHER" id="PTHR21235">
    <property type="entry name" value="IMIDAZOLE GLYCEROL PHOSPHATE SYNTHASE SUBUNIT HISF/H IGP SYNTHASE SUBUNIT HISF/H"/>
    <property type="match status" value="1"/>
</dbReference>
<dbReference type="Pfam" id="PF00977">
    <property type="entry name" value="His_biosynth"/>
    <property type="match status" value="1"/>
</dbReference>
<dbReference type="SUPFAM" id="SSF51366">
    <property type="entry name" value="Ribulose-phoshate binding barrel"/>
    <property type="match status" value="1"/>
</dbReference>
<accession>C4ZSB4</accession>
<evidence type="ECO:0000255" key="1">
    <source>
        <dbReference type="HAMAP-Rule" id="MF_01013"/>
    </source>
</evidence>
<gene>
    <name evidence="1" type="primary">hisF</name>
    <name type="ordered locus">BWG_1816</name>
</gene>
<proteinExistence type="inferred from homology"/>
<feature type="chain" id="PRO_1000213208" description="Imidazole glycerol phosphate synthase subunit HisF">
    <location>
        <begin position="1"/>
        <end position="258"/>
    </location>
</feature>
<feature type="active site" evidence="1">
    <location>
        <position position="11"/>
    </location>
</feature>
<feature type="active site" evidence="1">
    <location>
        <position position="130"/>
    </location>
</feature>
<comment type="function">
    <text evidence="1">IGPS catalyzes the conversion of PRFAR and glutamine to IGP, AICAR and glutamate. The HisF subunit catalyzes the cyclization activity that produces IGP and AICAR from PRFAR using the ammonia provided by the HisH subunit.</text>
</comment>
<comment type="catalytic activity">
    <reaction evidence="1">
        <text>5-[(5-phospho-1-deoxy-D-ribulos-1-ylimino)methylamino]-1-(5-phospho-beta-D-ribosyl)imidazole-4-carboxamide + L-glutamine = D-erythro-1-(imidazol-4-yl)glycerol 3-phosphate + 5-amino-1-(5-phospho-beta-D-ribosyl)imidazole-4-carboxamide + L-glutamate + H(+)</text>
        <dbReference type="Rhea" id="RHEA:24793"/>
        <dbReference type="ChEBI" id="CHEBI:15378"/>
        <dbReference type="ChEBI" id="CHEBI:29985"/>
        <dbReference type="ChEBI" id="CHEBI:58278"/>
        <dbReference type="ChEBI" id="CHEBI:58359"/>
        <dbReference type="ChEBI" id="CHEBI:58475"/>
        <dbReference type="ChEBI" id="CHEBI:58525"/>
        <dbReference type="EC" id="4.3.2.10"/>
    </reaction>
</comment>
<comment type="pathway">
    <text evidence="1">Amino-acid biosynthesis; L-histidine biosynthesis; L-histidine from 5-phospho-alpha-D-ribose 1-diphosphate: step 5/9.</text>
</comment>
<comment type="subunit">
    <text evidence="1">Heterodimer of HisH and HisF.</text>
</comment>
<comment type="subcellular location">
    <subcellularLocation>
        <location evidence="1">Cytoplasm</location>
    </subcellularLocation>
</comment>
<comment type="similarity">
    <text evidence="1">Belongs to the HisA/HisF family.</text>
</comment>